<accession>Q636L8</accession>
<dbReference type="EMBL" id="CP000001">
    <property type="protein sequence ID" value="AAU16698.1"/>
    <property type="molecule type" value="Genomic_DNA"/>
</dbReference>
<dbReference type="RefSeq" id="WP_001229392.1">
    <property type="nucleotide sequence ID" value="NZ_CP009968.1"/>
</dbReference>
<dbReference type="SMR" id="Q636L8"/>
<dbReference type="GeneID" id="93007304"/>
<dbReference type="KEGG" id="bcz:BCE33L3567"/>
<dbReference type="PATRIC" id="fig|288681.22.peg.1844"/>
<dbReference type="Proteomes" id="UP000002612">
    <property type="component" value="Chromosome"/>
</dbReference>
<dbReference type="GO" id="GO:0022627">
    <property type="term" value="C:cytosolic small ribosomal subunit"/>
    <property type="evidence" value="ECO:0007669"/>
    <property type="project" value="TreeGrafter"/>
</dbReference>
<dbReference type="GO" id="GO:0019843">
    <property type="term" value="F:rRNA binding"/>
    <property type="evidence" value="ECO:0007669"/>
    <property type="project" value="UniProtKB-UniRule"/>
</dbReference>
<dbReference type="GO" id="GO:0003735">
    <property type="term" value="F:structural constituent of ribosome"/>
    <property type="evidence" value="ECO:0007669"/>
    <property type="project" value="InterPro"/>
</dbReference>
<dbReference type="GO" id="GO:0006412">
    <property type="term" value="P:translation"/>
    <property type="evidence" value="ECO:0007669"/>
    <property type="project" value="UniProtKB-UniRule"/>
</dbReference>
<dbReference type="CDD" id="cd00353">
    <property type="entry name" value="Ribosomal_S15p_S13e"/>
    <property type="match status" value="1"/>
</dbReference>
<dbReference type="FunFam" id="1.10.287.10:FF:000002">
    <property type="entry name" value="30S ribosomal protein S15"/>
    <property type="match status" value="1"/>
</dbReference>
<dbReference type="Gene3D" id="6.10.250.3130">
    <property type="match status" value="1"/>
</dbReference>
<dbReference type="Gene3D" id="1.10.287.10">
    <property type="entry name" value="S15/NS1, RNA-binding"/>
    <property type="match status" value="1"/>
</dbReference>
<dbReference type="HAMAP" id="MF_01343_B">
    <property type="entry name" value="Ribosomal_uS15_B"/>
    <property type="match status" value="1"/>
</dbReference>
<dbReference type="InterPro" id="IPR000589">
    <property type="entry name" value="Ribosomal_uS15"/>
</dbReference>
<dbReference type="InterPro" id="IPR005290">
    <property type="entry name" value="Ribosomal_uS15_bac-type"/>
</dbReference>
<dbReference type="InterPro" id="IPR009068">
    <property type="entry name" value="uS15_NS1_RNA-bd_sf"/>
</dbReference>
<dbReference type="NCBIfam" id="TIGR00952">
    <property type="entry name" value="S15_bact"/>
    <property type="match status" value="1"/>
</dbReference>
<dbReference type="PANTHER" id="PTHR23321">
    <property type="entry name" value="RIBOSOMAL PROTEIN S15, BACTERIAL AND ORGANELLAR"/>
    <property type="match status" value="1"/>
</dbReference>
<dbReference type="PANTHER" id="PTHR23321:SF26">
    <property type="entry name" value="SMALL RIBOSOMAL SUBUNIT PROTEIN US15M"/>
    <property type="match status" value="1"/>
</dbReference>
<dbReference type="Pfam" id="PF00312">
    <property type="entry name" value="Ribosomal_S15"/>
    <property type="match status" value="1"/>
</dbReference>
<dbReference type="SMART" id="SM01387">
    <property type="entry name" value="Ribosomal_S15"/>
    <property type="match status" value="1"/>
</dbReference>
<dbReference type="SUPFAM" id="SSF47060">
    <property type="entry name" value="S15/NS1 RNA-binding domain"/>
    <property type="match status" value="1"/>
</dbReference>
<dbReference type="PROSITE" id="PS00362">
    <property type="entry name" value="RIBOSOMAL_S15"/>
    <property type="match status" value="1"/>
</dbReference>
<feature type="chain" id="PRO_0000115376" description="Small ribosomal subunit protein uS15">
    <location>
        <begin position="1"/>
        <end position="89"/>
    </location>
</feature>
<keyword id="KW-0687">Ribonucleoprotein</keyword>
<keyword id="KW-0689">Ribosomal protein</keyword>
<keyword id="KW-0694">RNA-binding</keyword>
<keyword id="KW-0699">rRNA-binding</keyword>
<evidence type="ECO:0000255" key="1">
    <source>
        <dbReference type="HAMAP-Rule" id="MF_01343"/>
    </source>
</evidence>
<evidence type="ECO:0000305" key="2"/>
<reference key="1">
    <citation type="journal article" date="2006" name="J. Bacteriol.">
        <title>Pathogenomic sequence analysis of Bacillus cereus and Bacillus thuringiensis isolates closely related to Bacillus anthracis.</title>
        <authorList>
            <person name="Han C.S."/>
            <person name="Xie G."/>
            <person name="Challacombe J.F."/>
            <person name="Altherr M.R."/>
            <person name="Bhotika S.S."/>
            <person name="Bruce D."/>
            <person name="Campbell C.S."/>
            <person name="Campbell M.L."/>
            <person name="Chen J."/>
            <person name="Chertkov O."/>
            <person name="Cleland C."/>
            <person name="Dimitrijevic M."/>
            <person name="Doggett N.A."/>
            <person name="Fawcett J.J."/>
            <person name="Glavina T."/>
            <person name="Goodwin L.A."/>
            <person name="Hill K.K."/>
            <person name="Hitchcock P."/>
            <person name="Jackson P.J."/>
            <person name="Keim P."/>
            <person name="Kewalramani A.R."/>
            <person name="Longmire J."/>
            <person name="Lucas S."/>
            <person name="Malfatti S."/>
            <person name="McMurry K."/>
            <person name="Meincke L.J."/>
            <person name="Misra M."/>
            <person name="Moseman B.L."/>
            <person name="Mundt M."/>
            <person name="Munk A.C."/>
            <person name="Okinaka R.T."/>
            <person name="Parson-Quintana B."/>
            <person name="Reilly L.P."/>
            <person name="Richardson P."/>
            <person name="Robinson D.L."/>
            <person name="Rubin E."/>
            <person name="Saunders E."/>
            <person name="Tapia R."/>
            <person name="Tesmer J.G."/>
            <person name="Thayer N."/>
            <person name="Thompson L.S."/>
            <person name="Tice H."/>
            <person name="Ticknor L.O."/>
            <person name="Wills P.L."/>
            <person name="Brettin T.S."/>
            <person name="Gilna P."/>
        </authorList>
    </citation>
    <scope>NUCLEOTIDE SEQUENCE [LARGE SCALE GENOMIC DNA]</scope>
    <source>
        <strain>ZK / E33L</strain>
    </source>
</reference>
<protein>
    <recommendedName>
        <fullName evidence="1">Small ribosomal subunit protein uS15</fullName>
    </recommendedName>
    <alternativeName>
        <fullName evidence="2">30S ribosomal protein S15</fullName>
    </alternativeName>
</protein>
<gene>
    <name evidence="1" type="primary">rpsO</name>
    <name type="ordered locus">BCE33L3567</name>
</gene>
<sequence length="89" mass="10560">MALTQERKNEIIAQFRTHETDTGSPEVQIAVLTEQINTLNEHLRTHKKDHHSRRGLLKMVGKRRNLLTYLRNSDITRYRELITKLGLRR</sequence>
<comment type="function">
    <text evidence="1">One of the primary rRNA binding proteins, it binds directly to 16S rRNA where it helps nucleate assembly of the platform of the 30S subunit by binding and bridging several RNA helices of the 16S rRNA.</text>
</comment>
<comment type="function">
    <text evidence="1">Forms an intersubunit bridge (bridge B4) with the 23S rRNA of the 50S subunit in the ribosome.</text>
</comment>
<comment type="subunit">
    <text evidence="1">Part of the 30S ribosomal subunit. Forms a bridge to the 50S subunit in the 70S ribosome, contacting the 23S rRNA.</text>
</comment>
<comment type="similarity">
    <text evidence="1">Belongs to the universal ribosomal protein uS15 family.</text>
</comment>
<proteinExistence type="inferred from homology"/>
<organism>
    <name type="scientific">Bacillus cereus (strain ZK / E33L)</name>
    <dbReference type="NCBI Taxonomy" id="288681"/>
    <lineage>
        <taxon>Bacteria</taxon>
        <taxon>Bacillati</taxon>
        <taxon>Bacillota</taxon>
        <taxon>Bacilli</taxon>
        <taxon>Bacillales</taxon>
        <taxon>Bacillaceae</taxon>
        <taxon>Bacillus</taxon>
        <taxon>Bacillus cereus group</taxon>
    </lineage>
</organism>
<name>RS15_BACCZ</name>